<accession>Q9SQV1</accession>
<dbReference type="EC" id="3.6.4.13"/>
<dbReference type="EMBL" id="AC011623">
    <property type="protein sequence ID" value="AAF08584.1"/>
    <property type="molecule type" value="Genomic_DNA"/>
</dbReference>
<dbReference type="EMBL" id="CP002686">
    <property type="protein sequence ID" value="AEE74400.1"/>
    <property type="molecule type" value="Genomic_DNA"/>
</dbReference>
<dbReference type="RefSeq" id="NP_187299.1">
    <property type="nucleotide sequence ID" value="NM_111523.3"/>
</dbReference>
<dbReference type="SMR" id="Q9SQV1"/>
<dbReference type="BioGRID" id="5160">
    <property type="interactions" value="3"/>
</dbReference>
<dbReference type="FunCoup" id="Q9SQV1">
    <property type="interactions" value="237"/>
</dbReference>
<dbReference type="STRING" id="3702.Q9SQV1"/>
<dbReference type="GlyGen" id="Q9SQV1">
    <property type="glycosylation" value="3 sites, 1 O-linked glycan (2 sites)"/>
</dbReference>
<dbReference type="iPTMnet" id="Q9SQV1"/>
<dbReference type="PaxDb" id="3702-AT3G06480.1"/>
<dbReference type="ProteomicsDB" id="236890"/>
<dbReference type="EnsemblPlants" id="AT3G06480.1">
    <property type="protein sequence ID" value="AT3G06480.1"/>
    <property type="gene ID" value="AT3G06480"/>
</dbReference>
<dbReference type="GeneID" id="819825"/>
<dbReference type="Gramene" id="AT3G06480.1">
    <property type="protein sequence ID" value="AT3G06480.1"/>
    <property type="gene ID" value="AT3G06480"/>
</dbReference>
<dbReference type="KEGG" id="ath:AT3G06480"/>
<dbReference type="Araport" id="AT3G06480"/>
<dbReference type="TAIR" id="AT3G06480">
    <property type="gene designation" value="RH40"/>
</dbReference>
<dbReference type="eggNOG" id="KOG0331">
    <property type="taxonomic scope" value="Eukaryota"/>
</dbReference>
<dbReference type="HOGENOM" id="CLU_003041_31_0_1"/>
<dbReference type="InParanoid" id="Q9SQV1"/>
<dbReference type="OMA" id="YPINALM"/>
<dbReference type="OrthoDB" id="196131at2759"/>
<dbReference type="PhylomeDB" id="Q9SQV1"/>
<dbReference type="PRO" id="PR:Q9SQV1"/>
<dbReference type="Proteomes" id="UP000006548">
    <property type="component" value="Chromosome 3"/>
</dbReference>
<dbReference type="ExpressionAtlas" id="Q9SQV1">
    <property type="expression patterns" value="baseline and differential"/>
</dbReference>
<dbReference type="GO" id="GO:0005634">
    <property type="term" value="C:nucleus"/>
    <property type="evidence" value="ECO:0007669"/>
    <property type="project" value="UniProtKB-SubCell"/>
</dbReference>
<dbReference type="GO" id="GO:0000325">
    <property type="term" value="C:plant-type vacuole"/>
    <property type="evidence" value="ECO:0007005"/>
    <property type="project" value="TAIR"/>
</dbReference>
<dbReference type="GO" id="GO:0005524">
    <property type="term" value="F:ATP binding"/>
    <property type="evidence" value="ECO:0007669"/>
    <property type="project" value="UniProtKB-KW"/>
</dbReference>
<dbReference type="GO" id="GO:0016887">
    <property type="term" value="F:ATP hydrolysis activity"/>
    <property type="evidence" value="ECO:0007669"/>
    <property type="project" value="RHEA"/>
</dbReference>
<dbReference type="GO" id="GO:0003723">
    <property type="term" value="F:RNA binding"/>
    <property type="evidence" value="ECO:0007669"/>
    <property type="project" value="UniProtKB-KW"/>
</dbReference>
<dbReference type="GO" id="GO:0003724">
    <property type="term" value="F:RNA helicase activity"/>
    <property type="evidence" value="ECO:0007669"/>
    <property type="project" value="UniProtKB-EC"/>
</dbReference>
<dbReference type="GO" id="GO:0000184">
    <property type="term" value="P:nuclear-transcribed mRNA catabolic process, nonsense-mediated decay"/>
    <property type="evidence" value="ECO:0007669"/>
    <property type="project" value="UniProtKB-KW"/>
</dbReference>
<dbReference type="GO" id="GO:0006364">
    <property type="term" value="P:rRNA processing"/>
    <property type="evidence" value="ECO:0007669"/>
    <property type="project" value="UniProtKB-KW"/>
</dbReference>
<dbReference type="CDD" id="cd18787">
    <property type="entry name" value="SF2_C_DEAD"/>
    <property type="match status" value="1"/>
</dbReference>
<dbReference type="CDD" id="cd00201">
    <property type="entry name" value="WW"/>
    <property type="match status" value="1"/>
</dbReference>
<dbReference type="FunFam" id="3.40.50.300:FF:000008">
    <property type="entry name" value="ATP-dependent RNA helicase RhlB"/>
    <property type="match status" value="1"/>
</dbReference>
<dbReference type="FunFam" id="3.40.50.300:FF:000079">
    <property type="entry name" value="probable ATP-dependent RNA helicase DDX17"/>
    <property type="match status" value="1"/>
</dbReference>
<dbReference type="Gene3D" id="2.20.70.10">
    <property type="match status" value="1"/>
</dbReference>
<dbReference type="Gene3D" id="3.40.50.300">
    <property type="entry name" value="P-loop containing nucleotide triphosphate hydrolases"/>
    <property type="match status" value="2"/>
</dbReference>
<dbReference type="InterPro" id="IPR011545">
    <property type="entry name" value="DEAD/DEAH_box_helicase_dom"/>
</dbReference>
<dbReference type="InterPro" id="IPR014001">
    <property type="entry name" value="Helicase_ATP-bd"/>
</dbReference>
<dbReference type="InterPro" id="IPR001650">
    <property type="entry name" value="Helicase_C-like"/>
</dbReference>
<dbReference type="InterPro" id="IPR027417">
    <property type="entry name" value="P-loop_NTPase"/>
</dbReference>
<dbReference type="InterPro" id="IPR000629">
    <property type="entry name" value="RNA-helicase_DEAD-box_CS"/>
</dbReference>
<dbReference type="InterPro" id="IPR014014">
    <property type="entry name" value="RNA_helicase_DEAD_Q_motif"/>
</dbReference>
<dbReference type="InterPro" id="IPR001202">
    <property type="entry name" value="WW_dom"/>
</dbReference>
<dbReference type="InterPro" id="IPR036020">
    <property type="entry name" value="WW_dom_sf"/>
</dbReference>
<dbReference type="PANTHER" id="PTHR47958">
    <property type="entry name" value="ATP-DEPENDENT RNA HELICASE DBP3"/>
    <property type="match status" value="1"/>
</dbReference>
<dbReference type="Pfam" id="PF00270">
    <property type="entry name" value="DEAD"/>
    <property type="match status" value="1"/>
</dbReference>
<dbReference type="Pfam" id="PF00271">
    <property type="entry name" value="Helicase_C"/>
    <property type="match status" value="1"/>
</dbReference>
<dbReference type="Pfam" id="PF00397">
    <property type="entry name" value="WW"/>
    <property type="match status" value="1"/>
</dbReference>
<dbReference type="SMART" id="SM00487">
    <property type="entry name" value="DEXDc"/>
    <property type="match status" value="1"/>
</dbReference>
<dbReference type="SMART" id="SM00490">
    <property type="entry name" value="HELICc"/>
    <property type="match status" value="1"/>
</dbReference>
<dbReference type="SMART" id="SM00456">
    <property type="entry name" value="WW"/>
    <property type="match status" value="1"/>
</dbReference>
<dbReference type="SUPFAM" id="SSF52540">
    <property type="entry name" value="P-loop containing nucleoside triphosphate hydrolases"/>
    <property type="match status" value="1"/>
</dbReference>
<dbReference type="SUPFAM" id="SSF51045">
    <property type="entry name" value="WW domain"/>
    <property type="match status" value="1"/>
</dbReference>
<dbReference type="PROSITE" id="PS00039">
    <property type="entry name" value="DEAD_ATP_HELICASE"/>
    <property type="match status" value="1"/>
</dbReference>
<dbReference type="PROSITE" id="PS51192">
    <property type="entry name" value="HELICASE_ATP_BIND_1"/>
    <property type="match status" value="1"/>
</dbReference>
<dbReference type="PROSITE" id="PS51194">
    <property type="entry name" value="HELICASE_CTER"/>
    <property type="match status" value="1"/>
</dbReference>
<dbReference type="PROSITE" id="PS51195">
    <property type="entry name" value="Q_MOTIF"/>
    <property type="match status" value="1"/>
</dbReference>
<dbReference type="PROSITE" id="PS01159">
    <property type="entry name" value="WW_DOMAIN_1"/>
    <property type="match status" value="1"/>
</dbReference>
<dbReference type="PROSITE" id="PS50020">
    <property type="entry name" value="WW_DOMAIN_2"/>
    <property type="match status" value="1"/>
</dbReference>
<gene>
    <name type="primary">RH40</name>
    <name type="ordered locus">At3g06480</name>
    <name type="ORF">F24P17.2</name>
</gene>
<organism>
    <name type="scientific">Arabidopsis thaliana</name>
    <name type="common">Mouse-ear cress</name>
    <dbReference type="NCBI Taxonomy" id="3702"/>
    <lineage>
        <taxon>Eukaryota</taxon>
        <taxon>Viridiplantae</taxon>
        <taxon>Streptophyta</taxon>
        <taxon>Embryophyta</taxon>
        <taxon>Tracheophyta</taxon>
        <taxon>Spermatophyta</taxon>
        <taxon>Magnoliopsida</taxon>
        <taxon>eudicotyledons</taxon>
        <taxon>Gunneridae</taxon>
        <taxon>Pentapetalae</taxon>
        <taxon>rosids</taxon>
        <taxon>malvids</taxon>
        <taxon>Brassicales</taxon>
        <taxon>Brassicaceae</taxon>
        <taxon>Camelineae</taxon>
        <taxon>Arabidopsis</taxon>
    </lineage>
</organism>
<name>RH40_ARATH</name>
<comment type="function">
    <text evidence="1">ATP-dependent RNA helicase involved nonsense-mediated mRNA decay and ribosome biogenesis through rRNA processing.</text>
</comment>
<comment type="catalytic activity">
    <reaction>
        <text>ATP + H2O = ADP + phosphate + H(+)</text>
        <dbReference type="Rhea" id="RHEA:13065"/>
        <dbReference type="ChEBI" id="CHEBI:15377"/>
        <dbReference type="ChEBI" id="CHEBI:15378"/>
        <dbReference type="ChEBI" id="CHEBI:30616"/>
        <dbReference type="ChEBI" id="CHEBI:43474"/>
        <dbReference type="ChEBI" id="CHEBI:456216"/>
        <dbReference type="EC" id="3.6.4.13"/>
    </reaction>
</comment>
<comment type="subcellular location">
    <subcellularLocation>
        <location evidence="1">Nucleus</location>
    </subcellularLocation>
</comment>
<comment type="domain">
    <text>The Q motif is unique to and characteristic of the DEAD box family of RNA helicases and controls ATP binding and hydrolysis.</text>
</comment>
<comment type="similarity">
    <text evidence="6">Belongs to the DEAD box helicase family. DDX5/DBP2 subfamily.</text>
</comment>
<reference key="1">
    <citation type="journal article" date="2000" name="Nature">
        <title>Sequence and analysis of chromosome 3 of the plant Arabidopsis thaliana.</title>
        <authorList>
            <person name="Salanoubat M."/>
            <person name="Lemcke K."/>
            <person name="Rieger M."/>
            <person name="Ansorge W."/>
            <person name="Unseld M."/>
            <person name="Fartmann B."/>
            <person name="Valle G."/>
            <person name="Bloecker H."/>
            <person name="Perez-Alonso M."/>
            <person name="Obermaier B."/>
            <person name="Delseny M."/>
            <person name="Boutry M."/>
            <person name="Grivell L.A."/>
            <person name="Mache R."/>
            <person name="Puigdomenech P."/>
            <person name="De Simone V."/>
            <person name="Choisne N."/>
            <person name="Artiguenave F."/>
            <person name="Robert C."/>
            <person name="Brottier P."/>
            <person name="Wincker P."/>
            <person name="Cattolico L."/>
            <person name="Weissenbach J."/>
            <person name="Saurin W."/>
            <person name="Quetier F."/>
            <person name="Schaefer M."/>
            <person name="Mueller-Auer S."/>
            <person name="Gabel C."/>
            <person name="Fuchs M."/>
            <person name="Benes V."/>
            <person name="Wurmbach E."/>
            <person name="Drzonek H."/>
            <person name="Erfle H."/>
            <person name="Jordan N."/>
            <person name="Bangert S."/>
            <person name="Wiedelmann R."/>
            <person name="Kranz H."/>
            <person name="Voss H."/>
            <person name="Holland R."/>
            <person name="Brandt P."/>
            <person name="Nyakatura G."/>
            <person name="Vezzi A."/>
            <person name="D'Angelo M."/>
            <person name="Pallavicini A."/>
            <person name="Toppo S."/>
            <person name="Simionati B."/>
            <person name="Conrad A."/>
            <person name="Hornischer K."/>
            <person name="Kauer G."/>
            <person name="Loehnert T.-H."/>
            <person name="Nordsiek G."/>
            <person name="Reichelt J."/>
            <person name="Scharfe M."/>
            <person name="Schoen O."/>
            <person name="Bargues M."/>
            <person name="Terol J."/>
            <person name="Climent J."/>
            <person name="Navarro P."/>
            <person name="Collado C."/>
            <person name="Perez-Perez A."/>
            <person name="Ottenwaelder B."/>
            <person name="Duchemin D."/>
            <person name="Cooke R."/>
            <person name="Laudie M."/>
            <person name="Berger-Llauro C."/>
            <person name="Purnelle B."/>
            <person name="Masuy D."/>
            <person name="de Haan M."/>
            <person name="Maarse A.C."/>
            <person name="Alcaraz J.-P."/>
            <person name="Cottet A."/>
            <person name="Casacuberta E."/>
            <person name="Monfort A."/>
            <person name="Argiriou A."/>
            <person name="Flores M."/>
            <person name="Liguori R."/>
            <person name="Vitale D."/>
            <person name="Mannhaupt G."/>
            <person name="Haase D."/>
            <person name="Schoof H."/>
            <person name="Rudd S."/>
            <person name="Zaccaria P."/>
            <person name="Mewes H.-W."/>
            <person name="Mayer K.F.X."/>
            <person name="Kaul S."/>
            <person name="Town C.D."/>
            <person name="Koo H.L."/>
            <person name="Tallon L.J."/>
            <person name="Jenkins J."/>
            <person name="Rooney T."/>
            <person name="Rizzo M."/>
            <person name="Walts A."/>
            <person name="Utterback T."/>
            <person name="Fujii C.Y."/>
            <person name="Shea T.P."/>
            <person name="Creasy T.H."/>
            <person name="Haas B."/>
            <person name="Maiti R."/>
            <person name="Wu D."/>
            <person name="Peterson J."/>
            <person name="Van Aken S."/>
            <person name="Pai G."/>
            <person name="Militscher J."/>
            <person name="Sellers P."/>
            <person name="Gill J.E."/>
            <person name="Feldblyum T.V."/>
            <person name="Preuss D."/>
            <person name="Lin X."/>
            <person name="Nierman W.C."/>
            <person name="Salzberg S.L."/>
            <person name="White O."/>
            <person name="Venter J.C."/>
            <person name="Fraser C.M."/>
            <person name="Kaneko T."/>
            <person name="Nakamura Y."/>
            <person name="Sato S."/>
            <person name="Kato T."/>
            <person name="Asamizu E."/>
            <person name="Sasamoto S."/>
            <person name="Kimura T."/>
            <person name="Idesawa K."/>
            <person name="Kawashima K."/>
            <person name="Kishida Y."/>
            <person name="Kiyokawa C."/>
            <person name="Kohara M."/>
            <person name="Matsumoto M."/>
            <person name="Matsuno A."/>
            <person name="Muraki A."/>
            <person name="Nakayama S."/>
            <person name="Nakazaki N."/>
            <person name="Shinpo S."/>
            <person name="Takeuchi C."/>
            <person name="Wada T."/>
            <person name="Watanabe A."/>
            <person name="Yamada M."/>
            <person name="Yasuda M."/>
            <person name="Tabata S."/>
        </authorList>
    </citation>
    <scope>NUCLEOTIDE SEQUENCE [LARGE SCALE GENOMIC DNA]</scope>
    <source>
        <strain>cv. Columbia</strain>
    </source>
</reference>
<reference key="2">
    <citation type="journal article" date="2017" name="Plant J.">
        <title>Araport11: a complete reannotation of the Arabidopsis thaliana reference genome.</title>
        <authorList>
            <person name="Cheng C.Y."/>
            <person name="Krishnakumar V."/>
            <person name="Chan A.P."/>
            <person name="Thibaud-Nissen F."/>
            <person name="Schobel S."/>
            <person name="Town C.D."/>
        </authorList>
    </citation>
    <scope>GENOME REANNOTATION</scope>
    <source>
        <strain>cv. Columbia</strain>
    </source>
</reference>
<reference key="3">
    <citation type="journal article" date="2004" name="Plant Biotechnol. J.">
        <title>DEAD-box RNA helicases in Arabidopsis thaliana: establishing a link between quantitative expression, gene structure and evolution of a family of genes.</title>
        <authorList>
            <person name="Mingam A."/>
            <person name="Toffano-Nioche C."/>
            <person name="Brunaud V."/>
            <person name="Boudet N."/>
            <person name="Kreis M."/>
            <person name="Lecharny A."/>
        </authorList>
    </citation>
    <scope>GENE FAMILY</scope>
    <scope>NOMENCLATURE</scope>
</reference>
<reference key="4">
    <citation type="journal article" date="2012" name="Mol. Cell. Proteomics">
        <title>Comparative large-scale characterisation of plant vs. mammal proteins reveals similar and idiosyncratic N-alpha acetylation features.</title>
        <authorList>
            <person name="Bienvenut W.V."/>
            <person name="Sumpton D."/>
            <person name="Martinez A."/>
            <person name="Lilla S."/>
            <person name="Espagne C."/>
            <person name="Meinnel T."/>
            <person name="Giglione C."/>
        </authorList>
    </citation>
    <scope>ACETYLATION [LARGE SCALE ANALYSIS] AT ALA-2</scope>
    <scope>CLEAVAGE OF INITIATOR METHIONINE [LARGE SCALE ANALYSIS]</scope>
    <scope>IDENTIFICATION BY MASS SPECTROMETRY [LARGE SCALE ANALYSIS]</scope>
</reference>
<reference key="5">
    <citation type="journal article" date="2013" name="PLoS ONE">
        <title>Genome-wide comparative in silico analysis of the RNA helicase gene family in Zea mays and Glycine max: a comparison with Arabidopsis and Oryza sativa.</title>
        <authorList>
            <person name="Xu R."/>
            <person name="Zhang S."/>
            <person name="Huang J."/>
            <person name="Zheng C."/>
        </authorList>
    </citation>
    <scope>GENE FAMILY</scope>
</reference>
<keyword id="KW-0007">Acetylation</keyword>
<keyword id="KW-0067">ATP-binding</keyword>
<keyword id="KW-0347">Helicase</keyword>
<keyword id="KW-0378">Hydrolase</keyword>
<keyword id="KW-0866">Nonsense-mediated mRNA decay</keyword>
<keyword id="KW-0547">Nucleotide-binding</keyword>
<keyword id="KW-0539">Nucleus</keyword>
<keyword id="KW-1185">Reference proteome</keyword>
<keyword id="KW-0690">Ribosome biogenesis</keyword>
<keyword id="KW-0694">RNA-binding</keyword>
<keyword id="KW-0698">rRNA processing</keyword>
<sequence length="1088" mass="119556">MATTEDTPASAGPRYAPEDPTLPQPWKGLIDGSTGILYYWNPETNVTQYERPSAPPPHSATTPKLAQIPVPSSGQGHQAQHEQAKPVGHVSQQHGFQQQPQQFPSQHVRPQMMQQHPAQQMPQQSGQQFPQQQSQSMVPHPHGHPSVQTYQPTTQQQQQGMQNQHSQMPQQLSHQYAHSQQHYMGFRPHMQTQGLQNSHQTPQGGPHGQQFPSQQEYNSLAPKREGDEFHGGKKTGFSQPHLPNSERSPSQNTHFEANAASQKTNANLAMAQKCNGPQANAAVTQFQQPGANLIHQQLGPRAPNQMDQTMLHQKSHVSPFQSNNTYENNLQSRPGNDSYVNMRMEVPVRGAQPLHPAAMPKDIRISGGPPTNADPAMGQTGHGTYGHAGPAFPNKSLVRPHFVTSPDVPHLSPVEIYRKQHEVTTTGENIPAPYITFESSGLPPEILRELLSAGFPSPTPIQAQTWPIALQSRDIVAIAKTGSGKTLGYLIPAFILLRHCRNDSRNGPTVLILAPTRELATQIQDEALRFGRSSRISCTCLYGGAPKGPQLKELERGADIVVATPGRLNDILEMKMIDFQQVSLLVLDEADRMLDMGFEPQIRKIVNEIPPRRQTLMYTATWPKEVRKIASDLLVNPVQVNIGRVDELAANKAITQYVEVVPQMEKERRLEQILRSQERGSKVIIFCSTKRLCDHLARSVGRHFGAVVIHGDKTQGERDWVLNQFRSGKSCVLIATDVAARGLDIKDIRVVINYDFPTGVEDYVHRIGRTGRAGATGVAFTFFTEQDWKYAPDLIKVLEGANQQVPPQVRDIAMRGGGGGGPGYSQDRRGMVNRFDSGGGGTRWDSGGGFGGRGGGFSGREGGFGGREGGFGGREGGFGGRGGRFGMRDDSFGRGGNRGRGFTGPDAGHMNVGGRGGFGRFGNNNNMESRGFGRGSGRGFGRGVGRFDNRRGRSRSRSPDLVRPRRRSSSYSRSRSRSGSYSRSRSRSRSWSRSRSRSPRHSRDRGGHNRSRSYSRSPSPVYERRDRAPRVSGFDIKPPVESVVNLDMNAAAAIENVVPTSLSERQGNGVVESEVEAALVRPVVDEEP</sequence>
<proteinExistence type="evidence at transcript level"/>
<feature type="initiator methionine" description="Removed" evidence="7">
    <location>
        <position position="1"/>
    </location>
</feature>
<feature type="chain" id="PRO_0000239180" description="DEAD-box ATP-dependent RNA helicase 40">
    <location>
        <begin position="2"/>
        <end position="1088"/>
    </location>
</feature>
<feature type="domain" description="WW" evidence="2">
    <location>
        <begin position="20"/>
        <end position="54"/>
    </location>
</feature>
<feature type="domain" description="Helicase ATP-binding" evidence="3">
    <location>
        <begin position="466"/>
        <end position="640"/>
    </location>
</feature>
<feature type="domain" description="Helicase C-terminal" evidence="4">
    <location>
        <begin position="669"/>
        <end position="813"/>
    </location>
</feature>
<feature type="region of interest" description="Disordered" evidence="5">
    <location>
        <begin position="1"/>
        <end position="28"/>
    </location>
</feature>
<feature type="region of interest" description="Disordered" evidence="5">
    <location>
        <begin position="47"/>
        <end position="178"/>
    </location>
</feature>
<feature type="region of interest" description="Disordered" evidence="5">
    <location>
        <begin position="192"/>
        <end position="254"/>
    </location>
</feature>
<feature type="region of interest" description="Disordered" evidence="5">
    <location>
        <begin position="861"/>
        <end position="1033"/>
    </location>
</feature>
<feature type="short sequence motif" description="Q motif">
    <location>
        <begin position="435"/>
        <end position="463"/>
    </location>
</feature>
<feature type="short sequence motif" description="DEAD box">
    <location>
        <begin position="588"/>
        <end position="591"/>
    </location>
</feature>
<feature type="compositionally biased region" description="Low complexity" evidence="5">
    <location>
        <begin position="87"/>
        <end position="137"/>
    </location>
</feature>
<feature type="compositionally biased region" description="Low complexity" evidence="5">
    <location>
        <begin position="148"/>
        <end position="171"/>
    </location>
</feature>
<feature type="compositionally biased region" description="Low complexity" evidence="5">
    <location>
        <begin position="200"/>
        <end position="215"/>
    </location>
</feature>
<feature type="compositionally biased region" description="Basic and acidic residues" evidence="5">
    <location>
        <begin position="222"/>
        <end position="231"/>
    </location>
</feature>
<feature type="compositionally biased region" description="Polar residues" evidence="5">
    <location>
        <begin position="236"/>
        <end position="254"/>
    </location>
</feature>
<feature type="compositionally biased region" description="Gly residues" evidence="5">
    <location>
        <begin position="861"/>
        <end position="885"/>
    </location>
</feature>
<feature type="compositionally biased region" description="Gly residues" evidence="5">
    <location>
        <begin position="893"/>
        <end position="902"/>
    </location>
</feature>
<feature type="compositionally biased region" description="Gly residues" evidence="5">
    <location>
        <begin position="911"/>
        <end position="920"/>
    </location>
</feature>
<feature type="compositionally biased region" description="Gly residues" evidence="5">
    <location>
        <begin position="932"/>
        <end position="944"/>
    </location>
</feature>
<feature type="compositionally biased region" description="Basic and acidic residues" evidence="5">
    <location>
        <begin position="945"/>
        <end position="963"/>
    </location>
</feature>
<feature type="compositionally biased region" description="Low complexity" evidence="5">
    <location>
        <begin position="969"/>
        <end position="983"/>
    </location>
</feature>
<feature type="compositionally biased region" description="Basic residues" evidence="5">
    <location>
        <begin position="984"/>
        <end position="1013"/>
    </location>
</feature>
<feature type="binding site" evidence="3">
    <location>
        <begin position="479"/>
        <end position="486"/>
    </location>
    <ligand>
        <name>ATP</name>
        <dbReference type="ChEBI" id="CHEBI:30616"/>
    </ligand>
</feature>
<feature type="modified residue" description="N-acetylalanine" evidence="7">
    <location>
        <position position="2"/>
    </location>
</feature>
<evidence type="ECO:0000250" key="1"/>
<evidence type="ECO:0000255" key="2">
    <source>
        <dbReference type="PROSITE-ProRule" id="PRU00224"/>
    </source>
</evidence>
<evidence type="ECO:0000255" key="3">
    <source>
        <dbReference type="PROSITE-ProRule" id="PRU00541"/>
    </source>
</evidence>
<evidence type="ECO:0000255" key="4">
    <source>
        <dbReference type="PROSITE-ProRule" id="PRU00542"/>
    </source>
</evidence>
<evidence type="ECO:0000256" key="5">
    <source>
        <dbReference type="SAM" id="MobiDB-lite"/>
    </source>
</evidence>
<evidence type="ECO:0000305" key="6"/>
<evidence type="ECO:0007744" key="7">
    <source>
    </source>
</evidence>
<protein>
    <recommendedName>
        <fullName>DEAD-box ATP-dependent RNA helicase 40</fullName>
        <ecNumber>3.6.4.13</ecNumber>
    </recommendedName>
</protein>